<comment type="function">
    <text evidence="1">Transcription factor involved in specification of neuronal cell types.</text>
</comment>
<comment type="subcellular location">
    <subcellularLocation>
        <location evidence="2">Nucleus</location>
    </subcellularLocation>
</comment>
<comment type="developmental stage">
    <text evidence="4">Initiates at the cellular blastoderm stage in distinct bilateral domains within the procephalic neuroectoderm. Present in narrow stripes that cover dorsolateral positions at about 75% egg length. During gastrulation, a second bilateral pair appears posteriorly to the initial domains, from which they are separated by a 3 to 4 cell wide gap. During germ band elongation, both the primary and secondary domains of expression become wedge-shaped. During stage 9, a third pair of bilateral domains appears anteriorly to the primary domains. The 3 domains of expression may reflect the proposed subdivision of the protocerebral primordium into an anterior, central, and posterior/optic lobe domain, respectively. The existence of gaps between the domains of expression suggests that it marks only a subset of cells within each of the 3 protocerebral primordia. Following stage 9, neuroblasts segregate from the domains and the central and posterior domains split into smaller subdomains. During later events of brain morphogenesis, the presence of 3 domains of expression can still be discerned, and prominent expression in late stage embryos include the optic lobe region. At late stage 11, it is also expressed in the ventral neuroectoderm, where it appears in a small cluster of neuronal precursors within each hemisegment.</text>
</comment>
<comment type="miscellaneous">
    <text>When expressed in mice, Hmx is able to functionally replace both Hmx2 and Hmx3 mouse proteins.</text>
</comment>
<comment type="similarity">
    <text evidence="5">Belongs to the HMX homeobox family.</text>
</comment>
<accession>Q9VEI9</accession>
<accession>A4IJ52</accession>
<accession>Q0IGR0</accession>
<reference key="1">
    <citation type="journal article" date="2000" name="Science">
        <title>The genome sequence of Drosophila melanogaster.</title>
        <authorList>
            <person name="Adams M.D."/>
            <person name="Celniker S.E."/>
            <person name="Holt R.A."/>
            <person name="Evans C.A."/>
            <person name="Gocayne J.D."/>
            <person name="Amanatides P.G."/>
            <person name="Scherer S.E."/>
            <person name="Li P.W."/>
            <person name="Hoskins R.A."/>
            <person name="Galle R.F."/>
            <person name="George R.A."/>
            <person name="Lewis S.E."/>
            <person name="Richards S."/>
            <person name="Ashburner M."/>
            <person name="Henderson S.N."/>
            <person name="Sutton G.G."/>
            <person name="Wortman J.R."/>
            <person name="Yandell M.D."/>
            <person name="Zhang Q."/>
            <person name="Chen L.X."/>
            <person name="Brandon R.C."/>
            <person name="Rogers Y.-H.C."/>
            <person name="Blazej R.G."/>
            <person name="Champe M."/>
            <person name="Pfeiffer B.D."/>
            <person name="Wan K.H."/>
            <person name="Doyle C."/>
            <person name="Baxter E.G."/>
            <person name="Helt G."/>
            <person name="Nelson C.R."/>
            <person name="Miklos G.L.G."/>
            <person name="Abril J.F."/>
            <person name="Agbayani A."/>
            <person name="An H.-J."/>
            <person name="Andrews-Pfannkoch C."/>
            <person name="Baldwin D."/>
            <person name="Ballew R.M."/>
            <person name="Basu A."/>
            <person name="Baxendale J."/>
            <person name="Bayraktaroglu L."/>
            <person name="Beasley E.M."/>
            <person name="Beeson K.Y."/>
            <person name="Benos P.V."/>
            <person name="Berman B.P."/>
            <person name="Bhandari D."/>
            <person name="Bolshakov S."/>
            <person name="Borkova D."/>
            <person name="Botchan M.R."/>
            <person name="Bouck J."/>
            <person name="Brokstein P."/>
            <person name="Brottier P."/>
            <person name="Burtis K.C."/>
            <person name="Busam D.A."/>
            <person name="Butler H."/>
            <person name="Cadieu E."/>
            <person name="Center A."/>
            <person name="Chandra I."/>
            <person name="Cherry J.M."/>
            <person name="Cawley S."/>
            <person name="Dahlke C."/>
            <person name="Davenport L.B."/>
            <person name="Davies P."/>
            <person name="de Pablos B."/>
            <person name="Delcher A."/>
            <person name="Deng Z."/>
            <person name="Mays A.D."/>
            <person name="Dew I."/>
            <person name="Dietz S.M."/>
            <person name="Dodson K."/>
            <person name="Doup L.E."/>
            <person name="Downes M."/>
            <person name="Dugan-Rocha S."/>
            <person name="Dunkov B.C."/>
            <person name="Dunn P."/>
            <person name="Durbin K.J."/>
            <person name="Evangelista C.C."/>
            <person name="Ferraz C."/>
            <person name="Ferriera S."/>
            <person name="Fleischmann W."/>
            <person name="Fosler C."/>
            <person name="Gabrielian A.E."/>
            <person name="Garg N.S."/>
            <person name="Gelbart W.M."/>
            <person name="Glasser K."/>
            <person name="Glodek A."/>
            <person name="Gong F."/>
            <person name="Gorrell J.H."/>
            <person name="Gu Z."/>
            <person name="Guan P."/>
            <person name="Harris M."/>
            <person name="Harris N.L."/>
            <person name="Harvey D.A."/>
            <person name="Heiman T.J."/>
            <person name="Hernandez J.R."/>
            <person name="Houck J."/>
            <person name="Hostin D."/>
            <person name="Houston K.A."/>
            <person name="Howland T.J."/>
            <person name="Wei M.-H."/>
            <person name="Ibegwam C."/>
            <person name="Jalali M."/>
            <person name="Kalush F."/>
            <person name="Karpen G.H."/>
            <person name="Ke Z."/>
            <person name="Kennison J.A."/>
            <person name="Ketchum K.A."/>
            <person name="Kimmel B.E."/>
            <person name="Kodira C.D."/>
            <person name="Kraft C.L."/>
            <person name="Kravitz S."/>
            <person name="Kulp D."/>
            <person name="Lai Z."/>
            <person name="Lasko P."/>
            <person name="Lei Y."/>
            <person name="Levitsky A.A."/>
            <person name="Li J.H."/>
            <person name="Li Z."/>
            <person name="Liang Y."/>
            <person name="Lin X."/>
            <person name="Liu X."/>
            <person name="Mattei B."/>
            <person name="McIntosh T.C."/>
            <person name="McLeod M.P."/>
            <person name="McPherson D."/>
            <person name="Merkulov G."/>
            <person name="Milshina N.V."/>
            <person name="Mobarry C."/>
            <person name="Morris J."/>
            <person name="Moshrefi A."/>
            <person name="Mount S.M."/>
            <person name="Moy M."/>
            <person name="Murphy B."/>
            <person name="Murphy L."/>
            <person name="Muzny D.M."/>
            <person name="Nelson D.L."/>
            <person name="Nelson D.R."/>
            <person name="Nelson K.A."/>
            <person name="Nixon K."/>
            <person name="Nusskern D.R."/>
            <person name="Pacleb J.M."/>
            <person name="Palazzolo M."/>
            <person name="Pittman G.S."/>
            <person name="Pan S."/>
            <person name="Pollard J."/>
            <person name="Puri V."/>
            <person name="Reese M.G."/>
            <person name="Reinert K."/>
            <person name="Remington K."/>
            <person name="Saunders R.D.C."/>
            <person name="Scheeler F."/>
            <person name="Shen H."/>
            <person name="Shue B.C."/>
            <person name="Siden-Kiamos I."/>
            <person name="Simpson M."/>
            <person name="Skupski M.P."/>
            <person name="Smith T.J."/>
            <person name="Spier E."/>
            <person name="Spradling A.C."/>
            <person name="Stapleton M."/>
            <person name="Strong R."/>
            <person name="Sun E."/>
            <person name="Svirskas R."/>
            <person name="Tector C."/>
            <person name="Turner R."/>
            <person name="Venter E."/>
            <person name="Wang A.H."/>
            <person name="Wang X."/>
            <person name="Wang Z.-Y."/>
            <person name="Wassarman D.A."/>
            <person name="Weinstock G.M."/>
            <person name="Weissenbach J."/>
            <person name="Williams S.M."/>
            <person name="Woodage T."/>
            <person name="Worley K.C."/>
            <person name="Wu D."/>
            <person name="Yang S."/>
            <person name="Yao Q.A."/>
            <person name="Ye J."/>
            <person name="Yeh R.-F."/>
            <person name="Zaveri J.S."/>
            <person name="Zhan M."/>
            <person name="Zhang G."/>
            <person name="Zhao Q."/>
            <person name="Zheng L."/>
            <person name="Zheng X.H."/>
            <person name="Zhong F.N."/>
            <person name="Zhong W."/>
            <person name="Zhou X."/>
            <person name="Zhu S.C."/>
            <person name="Zhu X."/>
            <person name="Smith H.O."/>
            <person name="Gibbs R.A."/>
            <person name="Myers E.W."/>
            <person name="Rubin G.M."/>
            <person name="Venter J.C."/>
        </authorList>
    </citation>
    <scope>NUCLEOTIDE SEQUENCE [LARGE SCALE GENOMIC DNA]</scope>
    <source>
        <strain>Berkeley</strain>
    </source>
</reference>
<reference key="2">
    <citation type="journal article" date="2002" name="Genome Biol.">
        <title>Annotation of the Drosophila melanogaster euchromatic genome: a systematic review.</title>
        <authorList>
            <person name="Misra S."/>
            <person name="Crosby M.A."/>
            <person name="Mungall C.J."/>
            <person name="Matthews B.B."/>
            <person name="Campbell K.S."/>
            <person name="Hradecky P."/>
            <person name="Huang Y."/>
            <person name="Kaminker J.S."/>
            <person name="Millburn G.H."/>
            <person name="Prochnik S.E."/>
            <person name="Smith C.D."/>
            <person name="Tupy J.L."/>
            <person name="Whitfield E.J."/>
            <person name="Bayraktaroglu L."/>
            <person name="Berman B.P."/>
            <person name="Bettencourt B.R."/>
            <person name="Celniker S.E."/>
            <person name="de Grey A.D.N.J."/>
            <person name="Drysdale R.A."/>
            <person name="Harris N.L."/>
            <person name="Richter J."/>
            <person name="Russo S."/>
            <person name="Schroeder A.J."/>
            <person name="Shu S.Q."/>
            <person name="Stapleton M."/>
            <person name="Yamada C."/>
            <person name="Ashburner M."/>
            <person name="Gelbart W.M."/>
            <person name="Rubin G.M."/>
            <person name="Lewis S.E."/>
        </authorList>
    </citation>
    <scope>GENOME REANNOTATION</scope>
    <source>
        <strain>Berkeley</strain>
    </source>
</reference>
<reference key="3">
    <citation type="submission" date="2007-03" db="EMBL/GenBank/DDBJ databases">
        <authorList>
            <person name="Stapleton M."/>
            <person name="Carlson J.W."/>
            <person name="Chavez C."/>
            <person name="Frise E."/>
            <person name="George R.A."/>
            <person name="Pacleb J.M."/>
            <person name="Kapadia B."/>
            <person name="Park S."/>
            <person name="Wan K.H."/>
            <person name="Yu C."/>
            <person name="Celniker S.E."/>
        </authorList>
    </citation>
    <scope>NUCLEOTIDE SEQUENCE [LARGE SCALE MRNA]</scope>
    <source>
        <strain>Berkeley</strain>
    </source>
</reference>
<reference key="4">
    <citation type="journal article" date="2000" name="Mech. Dev.">
        <title>Hmx: an evolutionary conserved homeobox gene family expressed in the developing nervous system in mice and Drosophila.</title>
        <authorList>
            <person name="Wang W."/>
            <person name="Lo P."/>
            <person name="Frasch M."/>
            <person name="Lufkin T."/>
        </authorList>
    </citation>
    <scope>DEVELOPMENTAL STAGE</scope>
</reference>
<reference key="5">
    <citation type="journal article" date="2004" name="Dev. Cell">
        <title>Hmx2 and Hmx3 homeobox genes direct development of the murine inner ear and hypothalamus and can be functionally replaced by Drosophila Hmx.</title>
        <authorList>
            <person name="Wang W."/>
            <person name="Grimmer J.F."/>
            <person name="Van De Water T.R."/>
            <person name="Lufkin T."/>
        </authorList>
    </citation>
    <scope>EXPRESSION IN MOUSE</scope>
</reference>
<sequence>MSSSEAEVDISVVSSPEPSPLGAAARDSPLLARSPARSADGSSPPATPTHRSNTPNTAAGTPTTSASGGNHFHHSPSGGAVPPAVLHHHLQHHLSSLGSHPVALHHALHTFGHLHPAHGATHPALLQHALTPTGQQQQQQLQVQQQHQQSHVERLSPPMKSPERNGGDEVQGHSLNNNNSKALNHNNTCASAAAAAAAAAVAAANLSNNSNDSNGSSGGGGGKSTTGSNGFTSFSISSILSRSEPAKKNGAAGLITPIPQLPQPGAGGPQDAAMLSRLGFISQWGALAGRYAALCPPGWPWAPQRLPFHSPTHDSSSTNTTENPPSPTSMSPNNNNNNSNTTASSNQASKSPSHHPLHPLYHPLGSQQQQQQQQQHQQHPQQQQHPQQQQQQHPHQPTTPTSSSSSGGGSSLTHHPHPHLTGSHGGYLLPSSSNESDEEGEEIIEEDDGTDGPSDSSSPHGDGNSKRKKKTRTVFSRAQVFQLESTFDLKRYLSSSERAGLAASLRLTETQVKIWFQNRRNKWKRQLAAELEAANMANMAHAAQRLVRVPVLYHDGTTAGFVPPPPPHHHPMQYYAAARNTSPPRPPLSSLV</sequence>
<feature type="chain" id="PRO_0000341381" description="Homeobox protein Hmx">
    <location>
        <begin position="1"/>
        <end position="592"/>
    </location>
</feature>
<feature type="DNA-binding region" description="Homeobox" evidence="2">
    <location>
        <begin position="468"/>
        <end position="527"/>
    </location>
</feature>
<feature type="region of interest" description="Disordered" evidence="3">
    <location>
        <begin position="1"/>
        <end position="83"/>
    </location>
</feature>
<feature type="region of interest" description="Disordered" evidence="3">
    <location>
        <begin position="132"/>
        <end position="183"/>
    </location>
</feature>
<feature type="region of interest" description="Disordered" evidence="3">
    <location>
        <begin position="248"/>
        <end position="269"/>
    </location>
</feature>
<feature type="region of interest" description="Disordered" evidence="3">
    <location>
        <begin position="305"/>
        <end position="473"/>
    </location>
</feature>
<feature type="compositionally biased region" description="Low complexity" evidence="3">
    <location>
        <begin position="52"/>
        <end position="70"/>
    </location>
</feature>
<feature type="compositionally biased region" description="Low complexity" evidence="3">
    <location>
        <begin position="135"/>
        <end position="149"/>
    </location>
</feature>
<feature type="compositionally biased region" description="Basic and acidic residues" evidence="3">
    <location>
        <begin position="161"/>
        <end position="171"/>
    </location>
</feature>
<feature type="compositionally biased region" description="Low complexity" evidence="3">
    <location>
        <begin position="173"/>
        <end position="183"/>
    </location>
</feature>
<feature type="compositionally biased region" description="Low complexity" evidence="3">
    <location>
        <begin position="315"/>
        <end position="351"/>
    </location>
</feature>
<feature type="compositionally biased region" description="Low complexity" evidence="3">
    <location>
        <begin position="358"/>
        <end position="405"/>
    </location>
</feature>
<feature type="compositionally biased region" description="Acidic residues" evidence="3">
    <location>
        <begin position="435"/>
        <end position="450"/>
    </location>
</feature>
<feature type="compositionally biased region" description="Low complexity" evidence="3">
    <location>
        <begin position="451"/>
        <end position="462"/>
    </location>
</feature>
<evidence type="ECO:0000250" key="1"/>
<evidence type="ECO:0000255" key="2">
    <source>
        <dbReference type="PROSITE-ProRule" id="PRU00108"/>
    </source>
</evidence>
<evidence type="ECO:0000256" key="3">
    <source>
        <dbReference type="SAM" id="MobiDB-lite"/>
    </source>
</evidence>
<evidence type="ECO:0000269" key="4">
    <source>
    </source>
</evidence>
<evidence type="ECO:0000305" key="5"/>
<gene>
    <name type="primary">Hmx</name>
    <name type="ORF">CG43748</name>
</gene>
<protein>
    <recommendedName>
        <fullName>Homeobox protein Hmx</fullName>
        <shortName>DHmx</shortName>
    </recommendedName>
</protein>
<keyword id="KW-0217">Developmental protein</keyword>
<keyword id="KW-0221">Differentiation</keyword>
<keyword id="KW-0238">DNA-binding</keyword>
<keyword id="KW-0371">Homeobox</keyword>
<keyword id="KW-0524">Neurogenesis</keyword>
<keyword id="KW-0539">Nucleus</keyword>
<keyword id="KW-1185">Reference proteome</keyword>
<keyword id="KW-0804">Transcription</keyword>
<keyword id="KW-0805">Transcription regulation</keyword>
<name>HMX_DROME</name>
<proteinExistence type="evidence at transcript level"/>
<dbReference type="EMBL" id="AE014297">
    <property type="protein sequence ID" value="AAF55432.3"/>
    <property type="molecule type" value="Genomic_DNA"/>
</dbReference>
<dbReference type="EMBL" id="BT028828">
    <property type="protein sequence ID" value="ABI34209.1"/>
    <property type="molecule type" value="mRNA"/>
</dbReference>
<dbReference type="EMBL" id="BT028860">
    <property type="protein sequence ID" value="ABI34241.1"/>
    <property type="molecule type" value="mRNA"/>
</dbReference>
<dbReference type="EMBL" id="BT030410">
    <property type="protein sequence ID" value="ABO52830.1"/>
    <property type="molecule type" value="mRNA"/>
</dbReference>
<dbReference type="RefSeq" id="NP_001287376.1">
    <property type="nucleotide sequence ID" value="NM_001300447.1"/>
</dbReference>
<dbReference type="RefSeq" id="NP_732244.3">
    <property type="nucleotide sequence ID" value="NM_169763.3"/>
</dbReference>
<dbReference type="SMR" id="Q9VEI9"/>
<dbReference type="BioGRID" id="67143">
    <property type="interactions" value="21"/>
</dbReference>
<dbReference type="FunCoup" id="Q9VEI9">
    <property type="interactions" value="54"/>
</dbReference>
<dbReference type="IntAct" id="Q9VEI9">
    <property type="interactions" value="2"/>
</dbReference>
<dbReference type="STRING" id="7227.FBpp0303412"/>
<dbReference type="GlyGen" id="Q9VEI9">
    <property type="glycosylation" value="2 sites"/>
</dbReference>
<dbReference type="PaxDb" id="7227-FBpp0303411"/>
<dbReference type="DNASU" id="42110"/>
<dbReference type="EnsemblMetazoa" id="FBtr0330385">
    <property type="protein sequence ID" value="FBpp0303411"/>
    <property type="gene ID" value="FBgn0264005"/>
</dbReference>
<dbReference type="EnsemblMetazoa" id="FBtr0346339">
    <property type="protein sequence ID" value="FBpp0312056"/>
    <property type="gene ID" value="FBgn0264005"/>
</dbReference>
<dbReference type="GeneID" id="42110"/>
<dbReference type="KEGG" id="dme:Dmel_CG43748"/>
<dbReference type="UCSC" id="CG34419-RC">
    <property type="organism name" value="d. melanogaster"/>
</dbReference>
<dbReference type="AGR" id="FB:FBgn0264005"/>
<dbReference type="CTD" id="42110"/>
<dbReference type="FlyBase" id="FBgn0264005">
    <property type="gene designation" value="Hmx"/>
</dbReference>
<dbReference type="VEuPathDB" id="VectorBase:FBgn0264005"/>
<dbReference type="eggNOG" id="KOG0485">
    <property type="taxonomic scope" value="Eukaryota"/>
</dbReference>
<dbReference type="HOGENOM" id="CLU_461734_0_0_1"/>
<dbReference type="InParanoid" id="Q9VEI9"/>
<dbReference type="OMA" id="WAPQRMP"/>
<dbReference type="OrthoDB" id="6159439at2759"/>
<dbReference type="PhylomeDB" id="Q9VEI9"/>
<dbReference type="BioGRID-ORCS" id="42110">
    <property type="hits" value="0 hits in 3 CRISPR screens"/>
</dbReference>
<dbReference type="GenomeRNAi" id="42110"/>
<dbReference type="PRO" id="PR:Q9VEI9"/>
<dbReference type="Proteomes" id="UP000000803">
    <property type="component" value="Chromosome 3R"/>
</dbReference>
<dbReference type="Bgee" id="FBgn0264005">
    <property type="expression patterns" value="Expressed in proximal medullary amacrine neuron Pm2 (Drosophila) in insect head and 42 other cell types or tissues"/>
</dbReference>
<dbReference type="ExpressionAtlas" id="Q9VEI9">
    <property type="expression patterns" value="baseline and differential"/>
</dbReference>
<dbReference type="GO" id="GO:0005634">
    <property type="term" value="C:nucleus"/>
    <property type="evidence" value="ECO:0000318"/>
    <property type="project" value="GO_Central"/>
</dbReference>
<dbReference type="GO" id="GO:0003677">
    <property type="term" value="F:DNA binding"/>
    <property type="evidence" value="ECO:0000250"/>
    <property type="project" value="UniProtKB"/>
</dbReference>
<dbReference type="GO" id="GO:0000981">
    <property type="term" value="F:DNA-binding transcription factor activity, RNA polymerase II-specific"/>
    <property type="evidence" value="ECO:0000318"/>
    <property type="project" value="GO_Central"/>
</dbReference>
<dbReference type="GO" id="GO:0000977">
    <property type="term" value="F:RNA polymerase II transcription regulatory region sequence-specific DNA binding"/>
    <property type="evidence" value="ECO:0000318"/>
    <property type="project" value="GO_Central"/>
</dbReference>
<dbReference type="GO" id="GO:0030154">
    <property type="term" value="P:cell differentiation"/>
    <property type="evidence" value="ECO:0007669"/>
    <property type="project" value="UniProtKB-KW"/>
</dbReference>
<dbReference type="GO" id="GO:0045892">
    <property type="term" value="P:negative regulation of DNA-templated transcription"/>
    <property type="evidence" value="ECO:0000250"/>
    <property type="project" value="UniProtKB"/>
</dbReference>
<dbReference type="GO" id="GO:0007399">
    <property type="term" value="P:nervous system development"/>
    <property type="evidence" value="ECO:0007669"/>
    <property type="project" value="UniProtKB-KW"/>
</dbReference>
<dbReference type="GO" id="GO:0006357">
    <property type="term" value="P:regulation of transcription by RNA polymerase II"/>
    <property type="evidence" value="ECO:0000318"/>
    <property type="project" value="GO_Central"/>
</dbReference>
<dbReference type="CDD" id="cd00086">
    <property type="entry name" value="homeodomain"/>
    <property type="match status" value="1"/>
</dbReference>
<dbReference type="FunFam" id="1.10.10.60:FF:000053">
    <property type="entry name" value="H6 family homeobox 2"/>
    <property type="match status" value="1"/>
</dbReference>
<dbReference type="Gene3D" id="1.10.10.60">
    <property type="entry name" value="Homeodomain-like"/>
    <property type="match status" value="1"/>
</dbReference>
<dbReference type="InterPro" id="IPR001356">
    <property type="entry name" value="HD"/>
</dbReference>
<dbReference type="InterPro" id="IPR020479">
    <property type="entry name" value="HD_metazoa"/>
</dbReference>
<dbReference type="InterPro" id="IPR051300">
    <property type="entry name" value="HMX_Homeobox_TF"/>
</dbReference>
<dbReference type="InterPro" id="IPR017970">
    <property type="entry name" value="Homeobox_CS"/>
</dbReference>
<dbReference type="InterPro" id="IPR009057">
    <property type="entry name" value="Homeodomain-like_sf"/>
</dbReference>
<dbReference type="PANTHER" id="PTHR46110">
    <property type="entry name" value="HOMEOBOX PROTEIN HMX"/>
    <property type="match status" value="1"/>
</dbReference>
<dbReference type="PANTHER" id="PTHR46110:SF3">
    <property type="entry name" value="HOMEOBOX PROTEIN HMX"/>
    <property type="match status" value="1"/>
</dbReference>
<dbReference type="Pfam" id="PF00046">
    <property type="entry name" value="Homeodomain"/>
    <property type="match status" value="1"/>
</dbReference>
<dbReference type="PRINTS" id="PR00024">
    <property type="entry name" value="HOMEOBOX"/>
</dbReference>
<dbReference type="SMART" id="SM00389">
    <property type="entry name" value="HOX"/>
    <property type="match status" value="1"/>
</dbReference>
<dbReference type="SUPFAM" id="SSF46689">
    <property type="entry name" value="Homeodomain-like"/>
    <property type="match status" value="1"/>
</dbReference>
<dbReference type="PROSITE" id="PS00027">
    <property type="entry name" value="HOMEOBOX_1"/>
    <property type="match status" value="1"/>
</dbReference>
<dbReference type="PROSITE" id="PS50071">
    <property type="entry name" value="HOMEOBOX_2"/>
    <property type="match status" value="1"/>
</dbReference>
<organism>
    <name type="scientific">Drosophila melanogaster</name>
    <name type="common">Fruit fly</name>
    <dbReference type="NCBI Taxonomy" id="7227"/>
    <lineage>
        <taxon>Eukaryota</taxon>
        <taxon>Metazoa</taxon>
        <taxon>Ecdysozoa</taxon>
        <taxon>Arthropoda</taxon>
        <taxon>Hexapoda</taxon>
        <taxon>Insecta</taxon>
        <taxon>Pterygota</taxon>
        <taxon>Neoptera</taxon>
        <taxon>Endopterygota</taxon>
        <taxon>Diptera</taxon>
        <taxon>Brachycera</taxon>
        <taxon>Muscomorpha</taxon>
        <taxon>Ephydroidea</taxon>
        <taxon>Drosophilidae</taxon>
        <taxon>Drosophila</taxon>
        <taxon>Sophophora</taxon>
    </lineage>
</organism>